<proteinExistence type="inferred from homology"/>
<accession>Q2YX63</accession>
<protein>
    <recommendedName>
        <fullName evidence="1">UPF0358 protein SAB0977</fullName>
    </recommendedName>
</protein>
<feature type="chain" id="PRO_1000069007" description="UPF0358 protein SAB0977">
    <location>
        <begin position="1"/>
        <end position="91"/>
    </location>
</feature>
<gene>
    <name type="ordered locus">SAB0977</name>
</gene>
<reference key="1">
    <citation type="journal article" date="2007" name="PLoS ONE">
        <title>Molecular correlates of host specialization in Staphylococcus aureus.</title>
        <authorList>
            <person name="Herron-Olson L."/>
            <person name="Fitzgerald J.R."/>
            <person name="Musser J.M."/>
            <person name="Kapur V."/>
        </authorList>
    </citation>
    <scope>NUCLEOTIDE SEQUENCE [LARGE SCALE GENOMIC DNA]</scope>
    <source>
        <strain>bovine RF122 / ET3-1</strain>
    </source>
</reference>
<evidence type="ECO:0000255" key="1">
    <source>
        <dbReference type="HAMAP-Rule" id="MF_01560"/>
    </source>
</evidence>
<name>Y977_STAAB</name>
<comment type="similarity">
    <text evidence="1">Belongs to the UPF0358 family.</text>
</comment>
<sequence>MAKQTTMKNAALKQLTKDADEILHLIKVQLDNLTLPSCPLYEEVLDTQMFGLQKEVDFAVKLGLVDREDGKQIMLRLEKELSKLHEAFTLV</sequence>
<dbReference type="EMBL" id="AJ938182">
    <property type="protein sequence ID" value="CAI80665.1"/>
    <property type="molecule type" value="Genomic_DNA"/>
</dbReference>
<dbReference type="RefSeq" id="WP_001118970.1">
    <property type="nucleotide sequence ID" value="NC_007622.1"/>
</dbReference>
<dbReference type="SMR" id="Q2YX63"/>
<dbReference type="KEGG" id="sab:SAB0977"/>
<dbReference type="HOGENOM" id="CLU_160493_1_0_9"/>
<dbReference type="Gene3D" id="1.10.287.750">
    <property type="entry name" value="SO2669-like"/>
    <property type="match status" value="1"/>
</dbReference>
<dbReference type="HAMAP" id="MF_01560">
    <property type="entry name" value="UPF0358"/>
    <property type="match status" value="1"/>
</dbReference>
<dbReference type="InterPro" id="IPR009983">
    <property type="entry name" value="UPF0358"/>
</dbReference>
<dbReference type="InterPro" id="IPR036270">
    <property type="entry name" value="UPF0358_sf"/>
</dbReference>
<dbReference type="NCBIfam" id="NF010187">
    <property type="entry name" value="PRK13666.1"/>
    <property type="match status" value="1"/>
</dbReference>
<dbReference type="Pfam" id="PF07408">
    <property type="entry name" value="DUF1507"/>
    <property type="match status" value="1"/>
</dbReference>
<dbReference type="SUPFAM" id="SSF140404">
    <property type="entry name" value="EF2458-like"/>
    <property type="match status" value="1"/>
</dbReference>
<organism>
    <name type="scientific">Staphylococcus aureus (strain bovine RF122 / ET3-1)</name>
    <dbReference type="NCBI Taxonomy" id="273036"/>
    <lineage>
        <taxon>Bacteria</taxon>
        <taxon>Bacillati</taxon>
        <taxon>Bacillota</taxon>
        <taxon>Bacilli</taxon>
        <taxon>Bacillales</taxon>
        <taxon>Staphylococcaceae</taxon>
        <taxon>Staphylococcus</taxon>
    </lineage>
</organism>